<name>MSHD_MYCTF</name>
<keyword id="KW-0012">Acyltransferase</keyword>
<keyword id="KW-0677">Repeat</keyword>
<keyword id="KW-0808">Transferase</keyword>
<protein>
    <recommendedName>
        <fullName evidence="1">Mycothiol acetyltransferase</fullName>
        <shortName evidence="1">MSH acetyltransferase</shortName>
        <ecNumber evidence="1">2.3.1.189</ecNumber>
    </recommendedName>
    <alternativeName>
        <fullName evidence="1">Mycothiol synthase</fullName>
    </alternativeName>
</protein>
<comment type="function">
    <text evidence="1">Catalyzes the transfer of acetyl from acetyl-CoA to desacetylmycothiol (Cys-GlcN-Ins) to form mycothiol.</text>
</comment>
<comment type="catalytic activity">
    <reaction evidence="1">
        <text>1D-myo-inositol 2-(L-cysteinylamino)-2-deoxy-alpha-D-glucopyranoside + acetyl-CoA = mycothiol + CoA + H(+)</text>
        <dbReference type="Rhea" id="RHEA:26172"/>
        <dbReference type="ChEBI" id="CHEBI:15378"/>
        <dbReference type="ChEBI" id="CHEBI:16768"/>
        <dbReference type="ChEBI" id="CHEBI:57287"/>
        <dbReference type="ChEBI" id="CHEBI:57288"/>
        <dbReference type="ChEBI" id="CHEBI:58887"/>
        <dbReference type="EC" id="2.3.1.189"/>
    </reaction>
</comment>
<comment type="subunit">
    <text evidence="1">Monomer.</text>
</comment>
<comment type="similarity">
    <text evidence="1">Belongs to the acetyltransferase family. MshD subfamily.</text>
</comment>
<gene>
    <name evidence="1" type="primary">mshD</name>
    <name type="ordered locus">TBFG_10834</name>
</gene>
<proteinExistence type="inferred from homology"/>
<accession>A5WKI8</accession>
<organism>
    <name type="scientific">Mycobacterium tuberculosis (strain F11)</name>
    <dbReference type="NCBI Taxonomy" id="336982"/>
    <lineage>
        <taxon>Bacteria</taxon>
        <taxon>Bacillati</taxon>
        <taxon>Actinomycetota</taxon>
        <taxon>Actinomycetes</taxon>
        <taxon>Mycobacteriales</taxon>
        <taxon>Mycobacteriaceae</taxon>
        <taxon>Mycobacterium</taxon>
        <taxon>Mycobacterium tuberculosis complex</taxon>
    </lineage>
</organism>
<dbReference type="EC" id="2.3.1.189" evidence="1"/>
<dbReference type="EMBL" id="CP000717">
    <property type="protein sequence ID" value="ABR05177.1"/>
    <property type="molecule type" value="Genomic_DNA"/>
</dbReference>
<dbReference type="RefSeq" id="WP_003404307.1">
    <property type="nucleotide sequence ID" value="NZ_KK339377.1"/>
</dbReference>
<dbReference type="SMR" id="A5WKI8"/>
<dbReference type="KEGG" id="mtf:TBFG_10834"/>
<dbReference type="PATRIC" id="fig|336982.11.peg.908"/>
<dbReference type="HOGENOM" id="CLU_068014_0_0_11"/>
<dbReference type="GO" id="GO:0035447">
    <property type="term" value="F:mycothiol synthase activity"/>
    <property type="evidence" value="ECO:0007669"/>
    <property type="project" value="UniProtKB-UniRule"/>
</dbReference>
<dbReference type="GO" id="GO:0008999">
    <property type="term" value="F:protein-N-terminal-alanine acetyltransferase activity"/>
    <property type="evidence" value="ECO:0007669"/>
    <property type="project" value="TreeGrafter"/>
</dbReference>
<dbReference type="GO" id="GO:0010125">
    <property type="term" value="P:mycothiol biosynthetic process"/>
    <property type="evidence" value="ECO:0007669"/>
    <property type="project" value="UniProtKB-UniRule"/>
</dbReference>
<dbReference type="CDD" id="cd04301">
    <property type="entry name" value="NAT_SF"/>
    <property type="match status" value="2"/>
</dbReference>
<dbReference type="FunFam" id="3.40.630.30:FF:000089">
    <property type="entry name" value="Mycothiol acetyltransferase"/>
    <property type="match status" value="1"/>
</dbReference>
<dbReference type="Gene3D" id="3.40.630.30">
    <property type="match status" value="1"/>
</dbReference>
<dbReference type="HAMAP" id="MF_01698">
    <property type="entry name" value="MshD"/>
    <property type="match status" value="1"/>
</dbReference>
<dbReference type="InterPro" id="IPR016181">
    <property type="entry name" value="Acyl_CoA_acyltransferase"/>
</dbReference>
<dbReference type="InterPro" id="IPR000182">
    <property type="entry name" value="GNAT_dom"/>
</dbReference>
<dbReference type="InterPro" id="IPR050276">
    <property type="entry name" value="MshD_Acetyltransferase"/>
</dbReference>
<dbReference type="InterPro" id="IPR017813">
    <property type="entry name" value="Mycothiol_AcTrfase"/>
</dbReference>
<dbReference type="NCBIfam" id="TIGR03448">
    <property type="entry name" value="mycothiol_MshD"/>
    <property type="match status" value="1"/>
</dbReference>
<dbReference type="PANTHER" id="PTHR43617">
    <property type="entry name" value="L-AMINO ACID N-ACETYLTRANSFERASE"/>
    <property type="match status" value="1"/>
</dbReference>
<dbReference type="PANTHER" id="PTHR43617:SF31">
    <property type="entry name" value="MYCOTHIOL ACETYLTRANSFERASE"/>
    <property type="match status" value="1"/>
</dbReference>
<dbReference type="Pfam" id="PF00583">
    <property type="entry name" value="Acetyltransf_1"/>
    <property type="match status" value="2"/>
</dbReference>
<dbReference type="PIRSF" id="PIRSF021524">
    <property type="entry name" value="MSH_acetyltransferase"/>
    <property type="match status" value="1"/>
</dbReference>
<dbReference type="SUPFAM" id="SSF55729">
    <property type="entry name" value="Acyl-CoA N-acyltransferases (Nat)"/>
    <property type="match status" value="1"/>
</dbReference>
<dbReference type="PROSITE" id="PS51186">
    <property type="entry name" value="GNAT"/>
    <property type="match status" value="2"/>
</dbReference>
<reference key="1">
    <citation type="submission" date="2007-04" db="EMBL/GenBank/DDBJ databases">
        <title>The complete genome sequence of Mycobacterium tuberculosis F11.</title>
        <authorList>
            <person name="Birren B."/>
            <person name="Lander E."/>
            <person name="Galagan J."/>
            <person name="Devon K."/>
            <person name="Nusbaum C."/>
            <person name="Borowsky M.L."/>
            <person name="Grabherr M."/>
            <person name="Mauceli E."/>
            <person name="Brockman W."/>
            <person name="Young S."/>
            <person name="LaButti K."/>
            <person name="Pushparaj V."/>
            <person name="Sykes S."/>
            <person name="Baldwin J."/>
            <person name="Fitzgerald M."/>
            <person name="Bloom T."/>
            <person name="Zimmer A."/>
            <person name="Settipalli S."/>
            <person name="Shea T."/>
            <person name="Arachchi H."/>
            <person name="Macdonald P."/>
            <person name="Abouelleil A."/>
            <person name="Lui A."/>
            <person name="Priest M."/>
            <person name="Berlin A."/>
            <person name="Gearin G."/>
            <person name="Brown A."/>
            <person name="Aftuck L."/>
            <person name="Bessette D."/>
            <person name="Allen N."/>
            <person name="Lubonja R."/>
            <person name="Lokyitsang T."/>
            <person name="Matthews C."/>
            <person name="Dunbar C."/>
            <person name="Benamara M."/>
            <person name="Nguyen T."/>
            <person name="Negash T."/>
            <person name="DeCaprio D."/>
            <person name="Crawford M."/>
            <person name="Koehrsen M."/>
            <person name="Engels R."/>
            <person name="Montgomery P."/>
            <person name="Pearson M."/>
            <person name="Howarth C."/>
            <person name="Kodira C."/>
            <person name="Zeng Q."/>
            <person name="Yandava C."/>
            <person name="O'Leary S."/>
            <person name="Alvarado L."/>
            <person name="Victor T."/>
            <person name="Murray M."/>
        </authorList>
    </citation>
    <scope>NUCLEOTIDE SEQUENCE [LARGE SCALE GENOMIC DNA]</scope>
    <source>
        <strain>F11</strain>
    </source>
</reference>
<sequence>MTALDWRSALTADEQRSVRALVTATTAVDGVAPVGEQVLRELGQQRTEHLLVAGSRPGGPIIGYLNLSPPRGAGGAMAELVVHPQSRRRGIGTAMARAALAKTAGRNQFWAHGTLDPARATASALGLVGVRELIQMRRPLRDIPEPTIPDGVVIRTYAGTSDDAELLRVNNAAFAGHPEQGGWTAVQLAERRGEAWFDPDGLILAFGDSPRERPGRLLGFHWTKVHPDHPGLGEVYVLGVDPAAQRRGLGQMLTSIGIVSLARRLGGRKTLDPAVEPAVLLYVESDNVAAVRTYQSLGFTTYSVDTAYALAGTDN</sequence>
<feature type="chain" id="PRO_0000400280" description="Mycothiol acetyltransferase">
    <location>
        <begin position="1"/>
        <end position="315"/>
    </location>
</feature>
<feature type="domain" description="N-acetyltransferase 1" evidence="1">
    <location>
        <begin position="4"/>
        <end position="141"/>
    </location>
</feature>
<feature type="domain" description="N-acetyltransferase 2" evidence="1">
    <location>
        <begin position="152"/>
        <end position="315"/>
    </location>
</feature>
<feature type="binding site" evidence="1">
    <location>
        <position position="36"/>
    </location>
    <ligand>
        <name>1D-myo-inositol 2-(L-cysteinylamino)-2-deoxy-alpha-D-glucopyranoside</name>
        <dbReference type="ChEBI" id="CHEBI:58887"/>
    </ligand>
</feature>
<feature type="binding site" evidence="1">
    <location>
        <begin position="80"/>
        <end position="82"/>
    </location>
    <ligand>
        <name>acetyl-CoA</name>
        <dbReference type="ChEBI" id="CHEBI:57288"/>
        <label>1</label>
    </ligand>
</feature>
<feature type="binding site" evidence="1">
    <location>
        <begin position="88"/>
        <end position="93"/>
    </location>
    <ligand>
        <name>acetyl-CoA</name>
        <dbReference type="ChEBI" id="CHEBI:57288"/>
        <label>1</label>
    </ligand>
</feature>
<feature type="binding site" evidence="1">
    <location>
        <position position="179"/>
    </location>
    <ligand>
        <name>1D-myo-inositol 2-(L-cysteinylamino)-2-deoxy-alpha-D-glucopyranoside</name>
        <dbReference type="ChEBI" id="CHEBI:58887"/>
    </ligand>
</feature>
<feature type="binding site" evidence="1">
    <location>
        <position position="224"/>
    </location>
    <ligand>
        <name>1D-myo-inositol 2-(L-cysteinylamino)-2-deoxy-alpha-D-glucopyranoside</name>
        <dbReference type="ChEBI" id="CHEBI:58887"/>
    </ligand>
</feature>
<feature type="binding site" evidence="1">
    <location>
        <position position="234"/>
    </location>
    <ligand>
        <name>1D-myo-inositol 2-(L-cysteinylamino)-2-deoxy-alpha-D-glucopyranoside</name>
        <dbReference type="ChEBI" id="CHEBI:58887"/>
    </ligand>
</feature>
<feature type="binding site" evidence="1">
    <location>
        <begin position="238"/>
        <end position="240"/>
    </location>
    <ligand>
        <name>acetyl-CoA</name>
        <dbReference type="ChEBI" id="CHEBI:57288"/>
        <label>2</label>
    </ligand>
</feature>
<feature type="binding site" evidence="1">
    <location>
        <begin position="245"/>
        <end position="251"/>
    </location>
    <ligand>
        <name>acetyl-CoA</name>
        <dbReference type="ChEBI" id="CHEBI:57288"/>
        <label>2</label>
    </ligand>
</feature>
<feature type="binding site" evidence="1">
    <location>
        <position position="282"/>
    </location>
    <ligand>
        <name>1D-myo-inositol 2-(L-cysteinylamino)-2-deoxy-alpha-D-glucopyranoside</name>
        <dbReference type="ChEBI" id="CHEBI:58887"/>
    </ligand>
</feature>
<feature type="binding site" evidence="1">
    <location>
        <begin position="287"/>
        <end position="292"/>
    </location>
    <ligand>
        <name>acetyl-CoA</name>
        <dbReference type="ChEBI" id="CHEBI:57288"/>
        <label>2</label>
    </ligand>
</feature>
<evidence type="ECO:0000255" key="1">
    <source>
        <dbReference type="HAMAP-Rule" id="MF_01698"/>
    </source>
</evidence>